<comment type="subcellular location">
    <subcellularLocation>
        <location evidence="1">Secreted</location>
    </subcellularLocation>
</comment>
<comment type="tissue specificity">
    <text evidence="5">Expressed by the venom gland.</text>
</comment>
<comment type="mass spectrometry"/>
<comment type="similarity">
    <text evidence="4">Belongs to the cationic peptide 04 (cupiennin) family. 09 subfamily.</text>
</comment>
<sequence>FLNPFRWVINKYREWKNKKDS</sequence>
<organism>
    <name type="scientific">Cupiennius salei</name>
    <name type="common">American wandering spider</name>
    <dbReference type="NCBI Taxonomy" id="6928"/>
    <lineage>
        <taxon>Eukaryota</taxon>
        <taxon>Metazoa</taxon>
        <taxon>Ecdysozoa</taxon>
        <taxon>Arthropoda</taxon>
        <taxon>Chelicerata</taxon>
        <taxon>Arachnida</taxon>
        <taxon>Araneae</taxon>
        <taxon>Araneomorphae</taxon>
        <taxon>Entelegynae</taxon>
        <taxon>Lycosoidea</taxon>
        <taxon>Ctenidae</taxon>
        <taxon>Cupiennius</taxon>
    </lineage>
</organism>
<name>TXC6E_CUPSA</name>
<protein>
    <recommendedName>
        <fullName evidence="3">Cupiennin-6e</fullName>
        <shortName evidence="3">Cu-6e</shortName>
    </recommendedName>
    <alternativeName>
        <fullName evidence="2">Short cationic peptide-6e</fullName>
        <shortName evidence="2">SCP-6e</shortName>
    </alternativeName>
</protein>
<keyword id="KW-0027">Amidation</keyword>
<keyword id="KW-0903">Direct protein sequencing</keyword>
<keyword id="KW-0964">Secreted</keyword>
<keyword id="KW-0800">Toxin</keyword>
<accession>B3EWW9</accession>
<feature type="peptide" id="PRO_0000421228" description="Cupiennin-6e" evidence="1">
    <location>
        <begin position="1"/>
        <end position="21"/>
    </location>
</feature>
<feature type="modified residue" description="Serine amide" evidence="1">
    <location>
        <position position="21"/>
    </location>
</feature>
<proteinExistence type="evidence at protein level"/>
<dbReference type="GO" id="GO:0005576">
    <property type="term" value="C:extracellular region"/>
    <property type="evidence" value="ECO:0007669"/>
    <property type="project" value="UniProtKB-SubCell"/>
</dbReference>
<dbReference type="GO" id="GO:0090729">
    <property type="term" value="F:toxin activity"/>
    <property type="evidence" value="ECO:0007669"/>
    <property type="project" value="UniProtKB-KW"/>
</dbReference>
<reference key="1">
    <citation type="journal article" date="2012" name="FEBS J.">
        <title>Multicomponent venom of the spider Cupiennius salei: a bioanalytical investigation applying different strategies.</title>
        <authorList>
            <person name="Trachsel C."/>
            <person name="Siegemund D."/>
            <person name="Kampfer U."/>
            <person name="Kopp L.S."/>
            <person name="Buhr C."/>
            <person name="Grossmann J."/>
            <person name="Luthi C."/>
            <person name="Cunningham M."/>
            <person name="Nentwig W."/>
            <person name="Kuhn-Nentwig L."/>
            <person name="Schurch S."/>
            <person name="Schaller J."/>
        </authorList>
    </citation>
    <scope>PROTEIN SEQUENCE</scope>
    <scope>MASS SPECTROMETRY</scope>
    <scope>AMIDATION AT SER-21</scope>
    <source>
        <tissue>Venom</tissue>
    </source>
</reference>
<reference key="2">
    <citation type="unpublished observations" date="2015-06">
        <authorList>
            <person name="Kuhn-Nentwig L."/>
            <person name="Gohel T."/>
        </authorList>
    </citation>
    <scope>NOMENCLATURE</scope>
</reference>
<evidence type="ECO:0000269" key="1">
    <source>
    </source>
</evidence>
<evidence type="ECO:0000303" key="2">
    <source>
    </source>
</evidence>
<evidence type="ECO:0000303" key="3">
    <source ref="2"/>
</evidence>
<evidence type="ECO:0000305" key="4"/>
<evidence type="ECO:0000305" key="5">
    <source>
    </source>
</evidence>